<keyword id="KW-1185">Reference proteome</keyword>
<organism>
    <name type="scientific">Caenorhabditis elegans</name>
    <dbReference type="NCBI Taxonomy" id="6239"/>
    <lineage>
        <taxon>Eukaryota</taxon>
        <taxon>Metazoa</taxon>
        <taxon>Ecdysozoa</taxon>
        <taxon>Nematoda</taxon>
        <taxon>Chromadorea</taxon>
        <taxon>Rhabditida</taxon>
        <taxon>Rhabditina</taxon>
        <taxon>Rhabditomorpha</taxon>
        <taxon>Rhabditoidea</taxon>
        <taxon>Rhabditidae</taxon>
        <taxon>Peloderinae</taxon>
        <taxon>Caenorhabditis</taxon>
    </lineage>
</organism>
<sequence length="301" mass="33655">MDSTMTNYMGQENLPPALKLINDKSYQYSTHKHNIETSNDGTLHSYTIVLSREPLESPTSYNKYQKNVEPVQKENQKPKDLNKMTAGPHIAVKNSSGLVSQISSTTSSERKRRTLARPSSSSESDLKVGNIQQSNQYFTLPSVMKPSALSTEDPKKVIVQSNTSSSSMSDASSKKSLPTYTYLSGHTTGSARYVTMVNVKFLLLHCDVLQRRAQSMFTDEFPSDCRLEEVVINFHQLCCRQLLDQNFNPRLSYCIGELNYSDSKPVSANDMSKTLAQLATTQSIAQLSIIVDVTEKNMKLK</sequence>
<dbReference type="EMBL" id="Z19153">
    <property type="protein sequence ID" value="CAA79547.1"/>
    <property type="molecule type" value="Genomic_DNA"/>
</dbReference>
<dbReference type="PIR" id="S28287">
    <property type="entry name" value="S28287"/>
</dbReference>
<dbReference type="RefSeq" id="NP_499063.1">
    <property type="nucleotide sequence ID" value="NM_066662.4"/>
</dbReference>
<dbReference type="FunCoup" id="Q03568">
    <property type="interactions" value="1522"/>
</dbReference>
<dbReference type="STRING" id="6239.C38C10.3.1"/>
<dbReference type="PaxDb" id="6239-C38C10.3"/>
<dbReference type="EnsemblMetazoa" id="C38C10.3.1">
    <property type="protein sequence ID" value="C38C10.3.1"/>
    <property type="gene ID" value="WBGene00008001"/>
</dbReference>
<dbReference type="GeneID" id="183309"/>
<dbReference type="KEGG" id="cel:CELE_C38C10.3"/>
<dbReference type="UCSC" id="C38C10.3">
    <property type="organism name" value="c. elegans"/>
</dbReference>
<dbReference type="AGR" id="WB:WBGene00008001"/>
<dbReference type="CTD" id="183309"/>
<dbReference type="WormBase" id="C38C10.3">
    <property type="protein sequence ID" value="CE00106"/>
    <property type="gene ID" value="WBGene00008001"/>
</dbReference>
<dbReference type="eggNOG" id="ENOG502THRK">
    <property type="taxonomic scope" value="Eukaryota"/>
</dbReference>
<dbReference type="HOGENOM" id="CLU_987764_0_0_1"/>
<dbReference type="InParanoid" id="Q03568"/>
<dbReference type="OMA" id="MACEPLI"/>
<dbReference type="OrthoDB" id="5834137at2759"/>
<dbReference type="PRO" id="PR:Q03568"/>
<dbReference type="Proteomes" id="UP000001940">
    <property type="component" value="Chromosome III"/>
</dbReference>
<dbReference type="Bgee" id="WBGene00008001">
    <property type="expression patterns" value="Expressed in adult organism and 1 other cell type or tissue"/>
</dbReference>
<dbReference type="InterPro" id="IPR007465">
    <property type="entry name" value="DUF508"/>
</dbReference>
<dbReference type="Pfam" id="PF04370">
    <property type="entry name" value="DUF508"/>
    <property type="match status" value="1"/>
</dbReference>
<feature type="chain" id="PRO_0000065229" description="Uncharacterized protein C38C10.3">
    <location>
        <begin position="1"/>
        <end position="301"/>
    </location>
</feature>
<feature type="region of interest" description="Disordered" evidence="1">
    <location>
        <begin position="56"/>
        <end position="126"/>
    </location>
</feature>
<feature type="region of interest" description="Disordered" evidence="1">
    <location>
        <begin position="149"/>
        <end position="173"/>
    </location>
</feature>
<feature type="compositionally biased region" description="Basic and acidic residues" evidence="1">
    <location>
        <begin position="71"/>
        <end position="82"/>
    </location>
</feature>
<feature type="compositionally biased region" description="Polar residues" evidence="1">
    <location>
        <begin position="93"/>
        <end position="102"/>
    </location>
</feature>
<feature type="compositionally biased region" description="Low complexity" evidence="1">
    <location>
        <begin position="161"/>
        <end position="173"/>
    </location>
</feature>
<reference key="1">
    <citation type="journal article" date="1994" name="Nature">
        <title>2.2 Mb of contiguous nucleotide sequence from chromosome III of C. elegans.</title>
        <authorList>
            <person name="Wilson R."/>
            <person name="Ainscough R."/>
            <person name="Anderson K."/>
            <person name="Baynes C."/>
            <person name="Berks M."/>
            <person name="Bonfield J."/>
            <person name="Burton J."/>
            <person name="Connell M."/>
            <person name="Copsey T."/>
            <person name="Cooper J."/>
            <person name="Coulson A."/>
            <person name="Craxton M."/>
            <person name="Dear S."/>
            <person name="Du Z."/>
            <person name="Durbin R."/>
            <person name="Favello A."/>
            <person name="Fraser A."/>
            <person name="Fulton L."/>
            <person name="Gardner A."/>
            <person name="Green P."/>
            <person name="Hawkins T."/>
            <person name="Hillier L."/>
            <person name="Jier M."/>
            <person name="Johnston L."/>
            <person name="Jones M."/>
            <person name="Kershaw J."/>
            <person name="Kirsten J."/>
            <person name="Laisster N."/>
            <person name="Latreille P."/>
            <person name="Lightning J."/>
            <person name="Lloyd C."/>
            <person name="Mortimore B."/>
            <person name="O'Callaghan M."/>
            <person name="Parsons J."/>
            <person name="Percy C."/>
            <person name="Rifken L."/>
            <person name="Roopra A."/>
            <person name="Saunders D."/>
            <person name="Shownkeen R."/>
            <person name="Sims M."/>
            <person name="Smaldon N."/>
            <person name="Smith A."/>
            <person name="Smith M."/>
            <person name="Sonnhammer E."/>
            <person name="Staden R."/>
            <person name="Sulston J."/>
            <person name="Thierry-Mieg J."/>
            <person name="Thomas K."/>
            <person name="Vaudin M."/>
            <person name="Vaughan K."/>
            <person name="Waterston R."/>
            <person name="Watson A."/>
            <person name="Weinstock L."/>
            <person name="Wilkinson-Sproat J."/>
            <person name="Wohldman P."/>
        </authorList>
    </citation>
    <scope>NUCLEOTIDE SEQUENCE [LARGE SCALE GENOMIC DNA]</scope>
    <source>
        <strain>Bristol N2</strain>
    </source>
</reference>
<reference key="2">
    <citation type="journal article" date="1998" name="Science">
        <title>Genome sequence of the nematode C. elegans: a platform for investigating biology.</title>
        <authorList>
            <consortium name="The C. elegans sequencing consortium"/>
        </authorList>
    </citation>
    <scope>NUCLEOTIDE SEQUENCE [LARGE SCALE GENOMIC DNA]</scope>
    <source>
        <strain>Bristol N2</strain>
    </source>
</reference>
<protein>
    <recommendedName>
        <fullName>Uncharacterized protein C38C10.3</fullName>
    </recommendedName>
</protein>
<name>YLD3_CAEEL</name>
<proteinExistence type="predicted"/>
<accession>Q03568</accession>
<evidence type="ECO:0000256" key="1">
    <source>
        <dbReference type="SAM" id="MobiDB-lite"/>
    </source>
</evidence>
<gene>
    <name type="ORF">C38C10.3</name>
</gene>